<dbReference type="EC" id="3.1.3.35" evidence="1"/>
<dbReference type="EC" id="3.1.3.5" evidence="4"/>
<dbReference type="EC" id="3.1.3.89" evidence="1"/>
<dbReference type="EC" id="3.1.3.91" evidence="1"/>
<dbReference type="EC" id="3.1.3.99" evidence="4"/>
<dbReference type="EMBL" id="L12059">
    <property type="protein sequence ID" value="AAC13542.1"/>
    <property type="molecule type" value="mRNA"/>
</dbReference>
<dbReference type="EMBL" id="AK028723">
    <property type="protein sequence ID" value="BAC26084.1"/>
    <property type="molecule type" value="mRNA"/>
</dbReference>
<dbReference type="EMBL" id="AK029979">
    <property type="protein sequence ID" value="BAC26714.1"/>
    <property type="molecule type" value="mRNA"/>
</dbReference>
<dbReference type="EMBL" id="AK154614">
    <property type="protein sequence ID" value="BAE32714.1"/>
    <property type="molecule type" value="mRNA"/>
</dbReference>
<dbReference type="CCDS" id="CCDS23386.1"/>
<dbReference type="PIR" id="JC2001">
    <property type="entry name" value="JC2001"/>
</dbReference>
<dbReference type="RefSeq" id="NP_035981.1">
    <property type="nucleotide sequence ID" value="NM_011851.4"/>
</dbReference>
<dbReference type="SMR" id="Q61503"/>
<dbReference type="BioGRID" id="204820">
    <property type="interactions" value="1"/>
</dbReference>
<dbReference type="FunCoup" id="Q61503">
    <property type="interactions" value="308"/>
</dbReference>
<dbReference type="IntAct" id="Q61503">
    <property type="interactions" value="1"/>
</dbReference>
<dbReference type="STRING" id="10090.ENSMUSP00000034992"/>
<dbReference type="BindingDB" id="Q61503"/>
<dbReference type="ChEMBL" id="CHEMBL4680034"/>
<dbReference type="GlyConnect" id="2099">
    <property type="glycosylation" value="1 N-Linked glycan (2 sites)"/>
</dbReference>
<dbReference type="GlyCosmos" id="Q61503">
    <property type="glycosylation" value="4 sites, 1 glycan"/>
</dbReference>
<dbReference type="GlyGen" id="Q61503">
    <property type="glycosylation" value="6 sites, 4 N-linked glycans (3 sites), 1 O-linked glycan (1 site)"/>
</dbReference>
<dbReference type="iPTMnet" id="Q61503"/>
<dbReference type="PhosphoSitePlus" id="Q61503"/>
<dbReference type="jPOST" id="Q61503"/>
<dbReference type="PaxDb" id="10090-ENSMUSP00000034992"/>
<dbReference type="PeptideAtlas" id="Q61503"/>
<dbReference type="ProteomicsDB" id="296423"/>
<dbReference type="Antibodypedia" id="3007">
    <property type="antibodies" value="1427 antibodies from 52 providers"/>
</dbReference>
<dbReference type="DNASU" id="23959"/>
<dbReference type="Ensembl" id="ENSMUST00000034992.8">
    <property type="protein sequence ID" value="ENSMUSP00000034992.7"/>
    <property type="gene ID" value="ENSMUSG00000032420.9"/>
</dbReference>
<dbReference type="GeneID" id="23959"/>
<dbReference type="KEGG" id="mmu:23959"/>
<dbReference type="UCSC" id="uc009qyj.2">
    <property type="organism name" value="mouse"/>
</dbReference>
<dbReference type="AGR" id="MGI:99782"/>
<dbReference type="CTD" id="4907"/>
<dbReference type="MGI" id="MGI:99782">
    <property type="gene designation" value="Nt5e"/>
</dbReference>
<dbReference type="VEuPathDB" id="HostDB:ENSMUSG00000032420"/>
<dbReference type="eggNOG" id="KOG4419">
    <property type="taxonomic scope" value="Eukaryota"/>
</dbReference>
<dbReference type="GeneTree" id="ENSGT00530000063775"/>
<dbReference type="HOGENOM" id="CLU_005854_7_1_1"/>
<dbReference type="InParanoid" id="Q61503"/>
<dbReference type="OMA" id="NYDCDSP"/>
<dbReference type="OrthoDB" id="7722975at2759"/>
<dbReference type="PhylomeDB" id="Q61503"/>
<dbReference type="TreeFam" id="TF323589"/>
<dbReference type="BRENDA" id="3.1.3.5">
    <property type="organism ID" value="3474"/>
</dbReference>
<dbReference type="Reactome" id="R-MMU-196807">
    <property type="pathway name" value="Nicotinate metabolism"/>
</dbReference>
<dbReference type="Reactome" id="R-MMU-73621">
    <property type="pathway name" value="Pyrimidine catabolism"/>
</dbReference>
<dbReference type="Reactome" id="R-MMU-74259">
    <property type="pathway name" value="Purine catabolism"/>
</dbReference>
<dbReference type="BioGRID-ORCS" id="23959">
    <property type="hits" value="1 hit in 80 CRISPR screens"/>
</dbReference>
<dbReference type="CD-CODE" id="CE726F99">
    <property type="entry name" value="Postsynaptic density"/>
</dbReference>
<dbReference type="PRO" id="PR:Q61503"/>
<dbReference type="Proteomes" id="UP000000589">
    <property type="component" value="Chromosome 9"/>
</dbReference>
<dbReference type="RNAct" id="Q61503">
    <property type="molecule type" value="protein"/>
</dbReference>
<dbReference type="Bgee" id="ENSMUSG00000032420">
    <property type="expression patterns" value="Expressed in epithelium of stomach and 202 other cell types or tissues"/>
</dbReference>
<dbReference type="ExpressionAtlas" id="Q61503">
    <property type="expression patterns" value="baseline and differential"/>
</dbReference>
<dbReference type="GO" id="GO:0005829">
    <property type="term" value="C:cytosol"/>
    <property type="evidence" value="ECO:0007669"/>
    <property type="project" value="Ensembl"/>
</dbReference>
<dbReference type="GO" id="GO:0009897">
    <property type="term" value="C:external side of plasma membrane"/>
    <property type="evidence" value="ECO:0000315"/>
    <property type="project" value="MGI"/>
</dbReference>
<dbReference type="GO" id="GO:0016020">
    <property type="term" value="C:membrane"/>
    <property type="evidence" value="ECO:0000314"/>
    <property type="project" value="MGI"/>
</dbReference>
<dbReference type="GO" id="GO:0005654">
    <property type="term" value="C:nucleoplasm"/>
    <property type="evidence" value="ECO:0007669"/>
    <property type="project" value="Ensembl"/>
</dbReference>
<dbReference type="GO" id="GO:0005886">
    <property type="term" value="C:plasma membrane"/>
    <property type="evidence" value="ECO:0000314"/>
    <property type="project" value="MGI"/>
</dbReference>
<dbReference type="GO" id="GO:0002953">
    <property type="term" value="F:5'-deoxynucleotidase activity"/>
    <property type="evidence" value="ECO:0007669"/>
    <property type="project" value="Ensembl"/>
</dbReference>
<dbReference type="GO" id="GO:0008253">
    <property type="term" value="F:5'-nucleotidase activity"/>
    <property type="evidence" value="ECO:0000314"/>
    <property type="project" value="UniProtKB"/>
</dbReference>
<dbReference type="GO" id="GO:0050484">
    <property type="term" value="F:GMP 5'-nucleotidase activity"/>
    <property type="evidence" value="ECO:0007669"/>
    <property type="project" value="Ensembl"/>
</dbReference>
<dbReference type="GO" id="GO:0042802">
    <property type="term" value="F:identical protein binding"/>
    <property type="evidence" value="ECO:0007669"/>
    <property type="project" value="Ensembl"/>
</dbReference>
<dbReference type="GO" id="GO:0050483">
    <property type="term" value="F:IMP 5'-nucleotidase activity"/>
    <property type="evidence" value="ECO:0007669"/>
    <property type="project" value="Ensembl"/>
</dbReference>
<dbReference type="GO" id="GO:0000166">
    <property type="term" value="F:nucleotide binding"/>
    <property type="evidence" value="ECO:0007669"/>
    <property type="project" value="UniProtKB-KW"/>
</dbReference>
<dbReference type="GO" id="GO:0050340">
    <property type="term" value="F:thymidylate 5'-phosphatase activity"/>
    <property type="evidence" value="ECO:0007669"/>
    <property type="project" value="Ensembl"/>
</dbReference>
<dbReference type="GO" id="GO:0008270">
    <property type="term" value="F:zinc ion binding"/>
    <property type="evidence" value="ECO:0007669"/>
    <property type="project" value="Ensembl"/>
</dbReference>
<dbReference type="GO" id="GO:0046086">
    <property type="term" value="P:adenosine biosynthetic process"/>
    <property type="evidence" value="ECO:0000315"/>
    <property type="project" value="MGI"/>
</dbReference>
<dbReference type="GO" id="GO:0046032">
    <property type="term" value="P:ADP catabolic process"/>
    <property type="evidence" value="ECO:0000315"/>
    <property type="project" value="MGI"/>
</dbReference>
<dbReference type="GO" id="GO:0006196">
    <property type="term" value="P:AMP catabolic process"/>
    <property type="evidence" value="ECO:0000315"/>
    <property type="project" value="MGI"/>
</dbReference>
<dbReference type="GO" id="GO:0046034">
    <property type="term" value="P:ATP metabolic process"/>
    <property type="evidence" value="ECO:0007669"/>
    <property type="project" value="Ensembl"/>
</dbReference>
<dbReference type="GO" id="GO:0055074">
    <property type="term" value="P:calcium ion homeostasis"/>
    <property type="evidence" value="ECO:0000316"/>
    <property type="project" value="MGI"/>
</dbReference>
<dbReference type="GO" id="GO:0140928">
    <property type="term" value="P:inhibition of non-skeletal tissue mineralization"/>
    <property type="evidence" value="ECO:0000315"/>
    <property type="project" value="MGI"/>
</dbReference>
<dbReference type="GO" id="GO:0007159">
    <property type="term" value="P:leukocyte cell-cell adhesion"/>
    <property type="evidence" value="ECO:0007669"/>
    <property type="project" value="Ensembl"/>
</dbReference>
<dbReference type="GO" id="GO:0050728">
    <property type="term" value="P:negative regulation of inflammatory response"/>
    <property type="evidence" value="ECO:0000315"/>
    <property type="project" value="MGI"/>
</dbReference>
<dbReference type="GO" id="GO:0033198">
    <property type="term" value="P:response to ATP"/>
    <property type="evidence" value="ECO:0007669"/>
    <property type="project" value="Ensembl"/>
</dbReference>
<dbReference type="CDD" id="cd07409">
    <property type="entry name" value="MPP_CD73_N"/>
    <property type="match status" value="1"/>
</dbReference>
<dbReference type="FunFam" id="3.90.780.10:FF:000001">
    <property type="entry name" value="NT5E isoform 3"/>
    <property type="match status" value="1"/>
</dbReference>
<dbReference type="FunFam" id="3.60.21.10:FF:000020">
    <property type="entry name" value="NT5E isoform 4"/>
    <property type="match status" value="1"/>
</dbReference>
<dbReference type="Gene3D" id="3.60.21.10">
    <property type="match status" value="1"/>
</dbReference>
<dbReference type="Gene3D" id="3.90.780.10">
    <property type="entry name" value="5'-Nucleotidase, C-terminal domain"/>
    <property type="match status" value="1"/>
</dbReference>
<dbReference type="InterPro" id="IPR008334">
    <property type="entry name" value="5'-Nucleotdase_C"/>
</dbReference>
<dbReference type="InterPro" id="IPR036907">
    <property type="entry name" value="5'-Nucleotdase_C_sf"/>
</dbReference>
<dbReference type="InterPro" id="IPR006146">
    <property type="entry name" value="5'-Nucleotdase_CS"/>
</dbReference>
<dbReference type="InterPro" id="IPR006179">
    <property type="entry name" value="5_nucleotidase/apyrase"/>
</dbReference>
<dbReference type="InterPro" id="IPR004843">
    <property type="entry name" value="Calcineurin-like_PHP_ApaH"/>
</dbReference>
<dbReference type="InterPro" id="IPR029052">
    <property type="entry name" value="Metallo-depent_PP-like"/>
</dbReference>
<dbReference type="PANTHER" id="PTHR11575:SF24">
    <property type="entry name" value="5'-NUCLEOTIDASE"/>
    <property type="match status" value="1"/>
</dbReference>
<dbReference type="PANTHER" id="PTHR11575">
    <property type="entry name" value="5'-NUCLEOTIDASE-RELATED"/>
    <property type="match status" value="1"/>
</dbReference>
<dbReference type="Pfam" id="PF02872">
    <property type="entry name" value="5_nucleotid_C"/>
    <property type="match status" value="1"/>
</dbReference>
<dbReference type="Pfam" id="PF00149">
    <property type="entry name" value="Metallophos"/>
    <property type="match status" value="1"/>
</dbReference>
<dbReference type="PRINTS" id="PR01607">
    <property type="entry name" value="APYRASEFAMLY"/>
</dbReference>
<dbReference type="SUPFAM" id="SSF55816">
    <property type="entry name" value="5'-nucleotidase (syn. UDP-sugar hydrolase), C-terminal domain"/>
    <property type="match status" value="1"/>
</dbReference>
<dbReference type="SUPFAM" id="SSF56300">
    <property type="entry name" value="Metallo-dependent phosphatases"/>
    <property type="match status" value="1"/>
</dbReference>
<dbReference type="PROSITE" id="PS00785">
    <property type="entry name" value="5_NUCLEOTIDASE_1"/>
    <property type="match status" value="1"/>
</dbReference>
<dbReference type="PROSITE" id="PS00786">
    <property type="entry name" value="5_NUCLEOTIDASE_2"/>
    <property type="match status" value="1"/>
</dbReference>
<gene>
    <name type="primary">Nt5e</name>
    <name type="synonym">Nt5</name>
    <name type="synonym">Nte</name>
</gene>
<proteinExistence type="evidence at protein level"/>
<protein>
    <recommendedName>
        <fullName>5'-nucleotidase</fullName>
        <shortName>5'-NT</shortName>
        <ecNumber evidence="1">3.1.3.35</ecNumber>
        <ecNumber evidence="4">3.1.3.5</ecNumber>
        <ecNumber evidence="1">3.1.3.89</ecNumber>
        <ecNumber evidence="1">3.1.3.91</ecNumber>
        <ecNumber evidence="4">3.1.3.99</ecNumber>
    </recommendedName>
    <alternativeName>
        <fullName evidence="1">5'-deoxynucleotidase</fullName>
    </alternativeName>
    <alternativeName>
        <fullName>Ecto-5'-nucleotidase</fullName>
    </alternativeName>
    <alternativeName>
        <fullName evidence="1">IMP-specific 5'-nucleotidase</fullName>
    </alternativeName>
    <alternativeName>
        <fullName evidence="1">Thymidylate 5'-phosphatase</fullName>
    </alternativeName>
    <cdAntigenName>CD73</cdAntigenName>
</protein>
<name>5NTD_MOUSE</name>
<evidence type="ECO:0000250" key="1">
    <source>
        <dbReference type="UniProtKB" id="P21589"/>
    </source>
</evidence>
<evidence type="ECO:0000255" key="2"/>
<evidence type="ECO:0000269" key="3">
    <source>
    </source>
</evidence>
<evidence type="ECO:0000269" key="4">
    <source>
    </source>
</evidence>
<evidence type="ECO:0000305" key="5"/>
<organism>
    <name type="scientific">Mus musculus</name>
    <name type="common">Mouse</name>
    <dbReference type="NCBI Taxonomy" id="10090"/>
    <lineage>
        <taxon>Eukaryota</taxon>
        <taxon>Metazoa</taxon>
        <taxon>Chordata</taxon>
        <taxon>Craniata</taxon>
        <taxon>Vertebrata</taxon>
        <taxon>Euteleostomi</taxon>
        <taxon>Mammalia</taxon>
        <taxon>Eutheria</taxon>
        <taxon>Euarchontoglires</taxon>
        <taxon>Glires</taxon>
        <taxon>Rodentia</taxon>
        <taxon>Myomorpha</taxon>
        <taxon>Muroidea</taxon>
        <taxon>Muridae</taxon>
        <taxon>Murinae</taxon>
        <taxon>Mus</taxon>
        <taxon>Mus</taxon>
    </lineage>
</organism>
<comment type="function">
    <text evidence="1 4">Catalyzes the hydrolysis of nucleotide monophosphates, releasing inorganic phosphate and the corresponding nucleoside (PubMed:8224905). Hydrolyzes IMP (PubMed:8224905). Shows a preference for ribonucleotide monophosphates over their equivalent deoxyribose forms (By similarity). Although AMP is the preferred substrate can also hydrolyze UMP, GMP, CMP, dAMP, dCMP, dTMP, NAD and NMN (By similarity).</text>
</comment>
<comment type="catalytic activity">
    <reaction evidence="4">
        <text>a ribonucleoside 5'-phosphate + H2O = a ribonucleoside + phosphate</text>
        <dbReference type="Rhea" id="RHEA:12484"/>
        <dbReference type="ChEBI" id="CHEBI:15377"/>
        <dbReference type="ChEBI" id="CHEBI:18254"/>
        <dbReference type="ChEBI" id="CHEBI:43474"/>
        <dbReference type="ChEBI" id="CHEBI:58043"/>
        <dbReference type="EC" id="3.1.3.5"/>
    </reaction>
</comment>
<comment type="catalytic activity">
    <reaction evidence="1">
        <text>a 2'-deoxyribonucleoside 5'-phosphate + H2O = a 2'-deoxyribonucleoside + phosphate</text>
        <dbReference type="Rhea" id="RHEA:36167"/>
        <dbReference type="ChEBI" id="CHEBI:15377"/>
        <dbReference type="ChEBI" id="CHEBI:18274"/>
        <dbReference type="ChEBI" id="CHEBI:43474"/>
        <dbReference type="ChEBI" id="CHEBI:65317"/>
        <dbReference type="EC" id="3.1.3.89"/>
    </reaction>
</comment>
<comment type="catalytic activity">
    <reaction evidence="1">
        <text>dTMP + H2O = thymidine + phosphate</text>
        <dbReference type="Rhea" id="RHEA:11080"/>
        <dbReference type="ChEBI" id="CHEBI:15377"/>
        <dbReference type="ChEBI" id="CHEBI:17748"/>
        <dbReference type="ChEBI" id="CHEBI:43474"/>
        <dbReference type="ChEBI" id="CHEBI:63528"/>
        <dbReference type="EC" id="3.1.3.35"/>
    </reaction>
</comment>
<comment type="catalytic activity">
    <reaction evidence="1">
        <text>CMP + H2O = cytidine + phosphate</text>
        <dbReference type="Rhea" id="RHEA:29367"/>
        <dbReference type="ChEBI" id="CHEBI:15377"/>
        <dbReference type="ChEBI" id="CHEBI:17562"/>
        <dbReference type="ChEBI" id="CHEBI:43474"/>
        <dbReference type="ChEBI" id="CHEBI:60377"/>
        <dbReference type="EC" id="3.1.3.91"/>
    </reaction>
</comment>
<comment type="catalytic activity">
    <reaction evidence="4">
        <text>IMP + H2O = inosine + phosphate</text>
        <dbReference type="Rhea" id="RHEA:27718"/>
        <dbReference type="ChEBI" id="CHEBI:15377"/>
        <dbReference type="ChEBI" id="CHEBI:17596"/>
        <dbReference type="ChEBI" id="CHEBI:43474"/>
        <dbReference type="ChEBI" id="CHEBI:58053"/>
        <dbReference type="EC" id="3.1.3.99"/>
    </reaction>
</comment>
<comment type="catalytic activity">
    <reaction evidence="1">
        <text>AMP + H2O = adenosine + phosphate</text>
        <dbReference type="Rhea" id="RHEA:29375"/>
        <dbReference type="ChEBI" id="CHEBI:15377"/>
        <dbReference type="ChEBI" id="CHEBI:16335"/>
        <dbReference type="ChEBI" id="CHEBI:43474"/>
        <dbReference type="ChEBI" id="CHEBI:456215"/>
    </reaction>
</comment>
<comment type="catalytic activity">
    <reaction evidence="1">
        <text>GMP + H2O = guanosine + phosphate</text>
        <dbReference type="Rhea" id="RHEA:27714"/>
        <dbReference type="ChEBI" id="CHEBI:15377"/>
        <dbReference type="ChEBI" id="CHEBI:16750"/>
        <dbReference type="ChEBI" id="CHEBI:43474"/>
        <dbReference type="ChEBI" id="CHEBI:58115"/>
    </reaction>
</comment>
<comment type="catalytic activity">
    <reaction evidence="1">
        <text>UMP + H2O = uridine + phosphate</text>
        <dbReference type="Rhea" id="RHEA:29359"/>
        <dbReference type="ChEBI" id="CHEBI:15377"/>
        <dbReference type="ChEBI" id="CHEBI:16704"/>
        <dbReference type="ChEBI" id="CHEBI:43474"/>
        <dbReference type="ChEBI" id="CHEBI:57865"/>
    </reaction>
</comment>
<comment type="catalytic activity">
    <reaction evidence="1">
        <text>dAMP + H2O = 2'-deoxyadenosine + phosphate</text>
        <dbReference type="Rhea" id="RHEA:29371"/>
        <dbReference type="ChEBI" id="CHEBI:15377"/>
        <dbReference type="ChEBI" id="CHEBI:17256"/>
        <dbReference type="ChEBI" id="CHEBI:43474"/>
        <dbReference type="ChEBI" id="CHEBI:58245"/>
    </reaction>
</comment>
<comment type="catalytic activity">
    <reaction evidence="1">
        <text>dCMP + H2O = 2'-deoxycytidine + phosphate</text>
        <dbReference type="Rhea" id="RHEA:29363"/>
        <dbReference type="ChEBI" id="CHEBI:15377"/>
        <dbReference type="ChEBI" id="CHEBI:15698"/>
        <dbReference type="ChEBI" id="CHEBI:43474"/>
        <dbReference type="ChEBI" id="CHEBI:57566"/>
    </reaction>
</comment>
<comment type="cofactor">
    <cofactor evidence="1">
        <name>Zn(2+)</name>
        <dbReference type="ChEBI" id="CHEBI:29105"/>
    </cofactor>
</comment>
<comment type="subunit">
    <text evidence="1">Homodimer.</text>
</comment>
<comment type="subcellular location">
    <subcellularLocation>
        <location evidence="1">Cell membrane</location>
        <topology evidence="1">Lipid-anchor</topology>
        <topology evidence="1">GPI-anchor</topology>
    </subcellularLocation>
</comment>
<comment type="tissue specificity">
    <text evidence="4">Expressed at high levels in the placenta, kidney, lung and stomach and at lower levels in the thymus, spleen, skeletal muscle and esophagus.</text>
</comment>
<comment type="similarity">
    <text evidence="5">Belongs to the 5'-nucleotidase family.</text>
</comment>
<keyword id="KW-1003">Cell membrane</keyword>
<keyword id="KW-1015">Disulfide bond</keyword>
<keyword id="KW-0325">Glycoprotein</keyword>
<keyword id="KW-0336">GPI-anchor</keyword>
<keyword id="KW-0378">Hydrolase</keyword>
<keyword id="KW-0449">Lipoprotein</keyword>
<keyword id="KW-0472">Membrane</keyword>
<keyword id="KW-0479">Metal-binding</keyword>
<keyword id="KW-0547">Nucleotide-binding</keyword>
<keyword id="KW-1185">Reference proteome</keyword>
<keyword id="KW-0732">Signal</keyword>
<keyword id="KW-0862">Zinc</keyword>
<feature type="signal peptide" evidence="1">
    <location>
        <begin position="1"/>
        <end position="28"/>
    </location>
</feature>
<feature type="chain" id="PRO_0000000017" description="5'-nucleotidase">
    <location>
        <begin position="29"/>
        <end position="551"/>
    </location>
</feature>
<feature type="propeptide" id="PRO_0000000018" description="Removed in mature form" evidence="1">
    <location>
        <begin position="552"/>
        <end position="576"/>
    </location>
</feature>
<feature type="binding site" evidence="1">
    <location>
        <position position="38"/>
    </location>
    <ligand>
        <name>Zn(2+)</name>
        <dbReference type="ChEBI" id="CHEBI:29105"/>
        <label>1</label>
    </ligand>
</feature>
<feature type="binding site" evidence="1">
    <location>
        <position position="38"/>
    </location>
    <ligand>
        <name>Zn(2+)</name>
        <dbReference type="ChEBI" id="CHEBI:29105"/>
        <label>2</label>
    </ligand>
</feature>
<feature type="binding site" evidence="1">
    <location>
        <position position="40"/>
    </location>
    <ligand>
        <name>Zn(2+)</name>
        <dbReference type="ChEBI" id="CHEBI:29105"/>
        <label>1</label>
    </ligand>
</feature>
<feature type="binding site" evidence="1">
    <location>
        <position position="87"/>
    </location>
    <ligand>
        <name>Zn(2+)</name>
        <dbReference type="ChEBI" id="CHEBI:29105"/>
        <label>1</label>
    </ligand>
</feature>
<feature type="binding site" evidence="1">
    <location>
        <position position="87"/>
    </location>
    <ligand>
        <name>Zn(2+)</name>
        <dbReference type="ChEBI" id="CHEBI:29105"/>
        <label>2</label>
    </ligand>
</feature>
<feature type="binding site" evidence="1">
    <location>
        <position position="119"/>
    </location>
    <ligand>
        <name>Zn(2+)</name>
        <dbReference type="ChEBI" id="CHEBI:29105"/>
        <label>2</label>
    </ligand>
</feature>
<feature type="binding site" evidence="1">
    <location>
        <position position="222"/>
    </location>
    <ligand>
        <name>Zn(2+)</name>
        <dbReference type="ChEBI" id="CHEBI:29105"/>
        <label>2</label>
    </ligand>
</feature>
<feature type="binding site" evidence="1">
    <location>
        <position position="245"/>
    </location>
    <ligand>
        <name>Zn(2+)</name>
        <dbReference type="ChEBI" id="CHEBI:29105"/>
        <label>2</label>
    </ligand>
</feature>
<feature type="binding site" evidence="1">
    <location>
        <position position="356"/>
    </location>
    <ligand>
        <name>AMP</name>
        <dbReference type="ChEBI" id="CHEBI:456215"/>
    </ligand>
</feature>
<feature type="binding site" evidence="1">
    <location>
        <position position="356"/>
    </location>
    <ligand>
        <name>IMP</name>
        <dbReference type="ChEBI" id="CHEBI:58053"/>
    </ligand>
</feature>
<feature type="binding site" evidence="1">
    <location>
        <position position="392"/>
    </location>
    <ligand>
        <name>AMP</name>
        <dbReference type="ChEBI" id="CHEBI:456215"/>
    </ligand>
</feature>
<feature type="binding site" evidence="1">
    <location>
        <position position="392"/>
    </location>
    <ligand>
        <name>IMP</name>
        <dbReference type="ChEBI" id="CHEBI:58053"/>
    </ligand>
</feature>
<feature type="binding site" evidence="1">
    <location>
        <position position="397"/>
    </location>
    <ligand>
        <name>AMP</name>
        <dbReference type="ChEBI" id="CHEBI:456215"/>
    </ligand>
</feature>
<feature type="binding site" evidence="1">
    <location>
        <position position="397"/>
    </location>
    <ligand>
        <name>IMP</name>
        <dbReference type="ChEBI" id="CHEBI:58053"/>
    </ligand>
</feature>
<feature type="binding site" evidence="1">
    <location>
        <position position="419"/>
    </location>
    <ligand>
        <name>AMP</name>
        <dbReference type="ChEBI" id="CHEBI:456215"/>
    </ligand>
</feature>
<feature type="binding site" evidence="1">
    <location>
        <position position="419"/>
    </location>
    <ligand>
        <name>IMP</name>
        <dbReference type="ChEBI" id="CHEBI:58053"/>
    </ligand>
</feature>
<feature type="binding site" evidence="1">
    <location>
        <position position="502"/>
    </location>
    <ligand>
        <name>AMP</name>
        <dbReference type="ChEBI" id="CHEBI:456215"/>
    </ligand>
</feature>
<feature type="binding site" evidence="1">
    <location>
        <position position="502"/>
    </location>
    <ligand>
        <name>IMP</name>
        <dbReference type="ChEBI" id="CHEBI:58053"/>
    </ligand>
</feature>
<feature type="binding site" evidence="1">
    <location>
        <position position="508"/>
    </location>
    <ligand>
        <name>AMP</name>
        <dbReference type="ChEBI" id="CHEBI:456215"/>
    </ligand>
</feature>
<feature type="binding site" evidence="1">
    <location>
        <position position="508"/>
    </location>
    <ligand>
        <name>IMP</name>
        <dbReference type="ChEBI" id="CHEBI:58053"/>
    </ligand>
</feature>
<feature type="site" description="Transition state stabilizer" evidence="1">
    <location>
        <position position="120"/>
    </location>
</feature>
<feature type="site" description="Transition state stabilizer" evidence="1">
    <location>
        <position position="123"/>
    </location>
</feature>
<feature type="lipid moiety-binding region" description="GPI-anchor amidated serine" evidence="1">
    <location>
        <position position="551"/>
    </location>
</feature>
<feature type="glycosylation site" description="N-linked (GlcNAc...) asparagine" evidence="2">
    <location>
        <position position="55"/>
    </location>
</feature>
<feature type="glycosylation site" description="N-linked (GlcNAc...) asparagine" evidence="3">
    <location>
        <position position="313"/>
    </location>
</feature>
<feature type="glycosylation site" description="N-linked (GlcNAc...) asparagine" evidence="3">
    <location>
        <position position="335"/>
    </location>
</feature>
<feature type="glycosylation site" description="N-linked (GlcNAc...) asparagine" evidence="2">
    <location>
        <position position="405"/>
    </location>
</feature>
<feature type="disulfide bond" evidence="1">
    <location>
        <begin position="53"/>
        <end position="59"/>
    </location>
</feature>
<feature type="disulfide bond" evidence="1">
    <location>
        <begin position="355"/>
        <end position="360"/>
    </location>
</feature>
<feature type="disulfide bond" evidence="1">
    <location>
        <begin position="367"/>
        <end position="389"/>
    </location>
</feature>
<feature type="disulfide bond" evidence="1">
    <location>
        <begin position="478"/>
        <end position="481"/>
    </location>
</feature>
<sequence>MRPAAAKVPKWLLLALSALLPQWPAASAWELTILHTNDVHSRLEQTSDDSTKCLNASLCVGGVARLFTKVQQIRKEEPNVLFLDAGDQYQGTIWFTVYKGLEVAHFMNILGYDAMALGNHEFDNGVEGLIDPLLRNVKFPILSANIKARGPLAHQISGLFLPSKVLSVGGEVVGIVGYTSKETPFLSNPGTNLVFEDEISALQPEVDKLKTLNVNKIIALGHSGFEMDKLIAQKVRGVDIVVGGHSNTFLYTGNPPSKEVPAGKYPFIVTADDGRQVPVVQAYAFGKYLGYLKVEFDDKGNVITSYGNPILLNSSIPEDATIKADINQWRIKLDNYSTQELGRTIVYLDGSTQTCRFRECNMGNLICDAMINNNLRHPDEMFWNHVSMCIVNGGGIRSPIDEKNNGTITWENLAAVLPFGGTFDLVQLKGSTLKKAFEHSVHRYGQSTGEFLQVGGIHVVYDINRKPWNRVVQLEVLCTKCRVPIYEPLEMDKVYKVTLPSYLANGGDGFQMIKDELLKHDSGDQDISVVSEYISKMKVVYPAVEGRIKFSAASHYQGSFPLVILSFWAMILILYQ</sequence>
<reference key="1">
    <citation type="journal article" date="1993" name="Gene">
        <title>Murine ecto-5'-nucleotidase (CD73): cDNA cloning and tissue distribution.</title>
        <authorList>
            <person name="Resta R."/>
            <person name="Hooker S.W."/>
            <person name="Hansen K.R."/>
            <person name="Laurent A.B."/>
            <person name="Park J.L."/>
            <person name="Blackburn M.R."/>
            <person name="Knudsen T.B."/>
            <person name="Thompson L.F."/>
        </authorList>
    </citation>
    <scope>NUCLEOTIDE SEQUENCE [MRNA]</scope>
    <scope>FUNCTION</scope>
    <scope>CATALYTIC ACTIVITY</scope>
    <scope>TISSUE SPECIFICITY</scope>
    <source>
        <strain>BALB/cJ</strain>
        <tissue>Kidney</tissue>
    </source>
</reference>
<reference key="2">
    <citation type="journal article" date="2005" name="Science">
        <title>The transcriptional landscape of the mammalian genome.</title>
        <authorList>
            <person name="Carninci P."/>
            <person name="Kasukawa T."/>
            <person name="Katayama S."/>
            <person name="Gough J."/>
            <person name="Frith M.C."/>
            <person name="Maeda N."/>
            <person name="Oyama R."/>
            <person name="Ravasi T."/>
            <person name="Lenhard B."/>
            <person name="Wells C."/>
            <person name="Kodzius R."/>
            <person name="Shimokawa K."/>
            <person name="Bajic V.B."/>
            <person name="Brenner S.E."/>
            <person name="Batalov S."/>
            <person name="Forrest A.R."/>
            <person name="Zavolan M."/>
            <person name="Davis M.J."/>
            <person name="Wilming L.G."/>
            <person name="Aidinis V."/>
            <person name="Allen J.E."/>
            <person name="Ambesi-Impiombato A."/>
            <person name="Apweiler R."/>
            <person name="Aturaliya R.N."/>
            <person name="Bailey T.L."/>
            <person name="Bansal M."/>
            <person name="Baxter L."/>
            <person name="Beisel K.W."/>
            <person name="Bersano T."/>
            <person name="Bono H."/>
            <person name="Chalk A.M."/>
            <person name="Chiu K.P."/>
            <person name="Choudhary V."/>
            <person name="Christoffels A."/>
            <person name="Clutterbuck D.R."/>
            <person name="Crowe M.L."/>
            <person name="Dalla E."/>
            <person name="Dalrymple B.P."/>
            <person name="de Bono B."/>
            <person name="Della Gatta G."/>
            <person name="di Bernardo D."/>
            <person name="Down T."/>
            <person name="Engstrom P."/>
            <person name="Fagiolini M."/>
            <person name="Faulkner G."/>
            <person name="Fletcher C.F."/>
            <person name="Fukushima T."/>
            <person name="Furuno M."/>
            <person name="Futaki S."/>
            <person name="Gariboldi M."/>
            <person name="Georgii-Hemming P."/>
            <person name="Gingeras T.R."/>
            <person name="Gojobori T."/>
            <person name="Green R.E."/>
            <person name="Gustincich S."/>
            <person name="Harbers M."/>
            <person name="Hayashi Y."/>
            <person name="Hensch T.K."/>
            <person name="Hirokawa N."/>
            <person name="Hill D."/>
            <person name="Huminiecki L."/>
            <person name="Iacono M."/>
            <person name="Ikeo K."/>
            <person name="Iwama A."/>
            <person name="Ishikawa T."/>
            <person name="Jakt M."/>
            <person name="Kanapin A."/>
            <person name="Katoh M."/>
            <person name="Kawasawa Y."/>
            <person name="Kelso J."/>
            <person name="Kitamura H."/>
            <person name="Kitano H."/>
            <person name="Kollias G."/>
            <person name="Krishnan S.P."/>
            <person name="Kruger A."/>
            <person name="Kummerfeld S.K."/>
            <person name="Kurochkin I.V."/>
            <person name="Lareau L.F."/>
            <person name="Lazarevic D."/>
            <person name="Lipovich L."/>
            <person name="Liu J."/>
            <person name="Liuni S."/>
            <person name="McWilliam S."/>
            <person name="Madan Babu M."/>
            <person name="Madera M."/>
            <person name="Marchionni L."/>
            <person name="Matsuda H."/>
            <person name="Matsuzawa S."/>
            <person name="Miki H."/>
            <person name="Mignone F."/>
            <person name="Miyake S."/>
            <person name="Morris K."/>
            <person name="Mottagui-Tabar S."/>
            <person name="Mulder N."/>
            <person name="Nakano N."/>
            <person name="Nakauchi H."/>
            <person name="Ng P."/>
            <person name="Nilsson R."/>
            <person name="Nishiguchi S."/>
            <person name="Nishikawa S."/>
            <person name="Nori F."/>
            <person name="Ohara O."/>
            <person name="Okazaki Y."/>
            <person name="Orlando V."/>
            <person name="Pang K.C."/>
            <person name="Pavan W.J."/>
            <person name="Pavesi G."/>
            <person name="Pesole G."/>
            <person name="Petrovsky N."/>
            <person name="Piazza S."/>
            <person name="Reed J."/>
            <person name="Reid J.F."/>
            <person name="Ring B.Z."/>
            <person name="Ringwald M."/>
            <person name="Rost B."/>
            <person name="Ruan Y."/>
            <person name="Salzberg S.L."/>
            <person name="Sandelin A."/>
            <person name="Schneider C."/>
            <person name="Schoenbach C."/>
            <person name="Sekiguchi K."/>
            <person name="Semple C.A."/>
            <person name="Seno S."/>
            <person name="Sessa L."/>
            <person name="Sheng Y."/>
            <person name="Shibata Y."/>
            <person name="Shimada H."/>
            <person name="Shimada K."/>
            <person name="Silva D."/>
            <person name="Sinclair B."/>
            <person name="Sperling S."/>
            <person name="Stupka E."/>
            <person name="Sugiura K."/>
            <person name="Sultana R."/>
            <person name="Takenaka Y."/>
            <person name="Taki K."/>
            <person name="Tammoja K."/>
            <person name="Tan S.L."/>
            <person name="Tang S."/>
            <person name="Taylor M.S."/>
            <person name="Tegner J."/>
            <person name="Teichmann S.A."/>
            <person name="Ueda H.R."/>
            <person name="van Nimwegen E."/>
            <person name="Verardo R."/>
            <person name="Wei C.L."/>
            <person name="Yagi K."/>
            <person name="Yamanishi H."/>
            <person name="Zabarovsky E."/>
            <person name="Zhu S."/>
            <person name="Zimmer A."/>
            <person name="Hide W."/>
            <person name="Bult C."/>
            <person name="Grimmond S.M."/>
            <person name="Teasdale R.D."/>
            <person name="Liu E.T."/>
            <person name="Brusic V."/>
            <person name="Quackenbush J."/>
            <person name="Wahlestedt C."/>
            <person name="Mattick J.S."/>
            <person name="Hume D.A."/>
            <person name="Kai C."/>
            <person name="Sasaki D."/>
            <person name="Tomaru Y."/>
            <person name="Fukuda S."/>
            <person name="Kanamori-Katayama M."/>
            <person name="Suzuki M."/>
            <person name="Aoki J."/>
            <person name="Arakawa T."/>
            <person name="Iida J."/>
            <person name="Imamura K."/>
            <person name="Itoh M."/>
            <person name="Kato T."/>
            <person name="Kawaji H."/>
            <person name="Kawagashira N."/>
            <person name="Kawashima T."/>
            <person name="Kojima M."/>
            <person name="Kondo S."/>
            <person name="Konno H."/>
            <person name="Nakano K."/>
            <person name="Ninomiya N."/>
            <person name="Nishio T."/>
            <person name="Okada M."/>
            <person name="Plessy C."/>
            <person name="Shibata K."/>
            <person name="Shiraki T."/>
            <person name="Suzuki S."/>
            <person name="Tagami M."/>
            <person name="Waki K."/>
            <person name="Watahiki A."/>
            <person name="Okamura-Oho Y."/>
            <person name="Suzuki H."/>
            <person name="Kawai J."/>
            <person name="Hayashizaki Y."/>
        </authorList>
    </citation>
    <scope>NUCLEOTIDE SEQUENCE [LARGE SCALE MRNA]</scope>
    <source>
        <strain>C57BL/6J</strain>
        <strain>NOD</strain>
        <tissue>Skin</tissue>
        <tissue>Testis</tissue>
    </source>
</reference>
<reference key="3">
    <citation type="journal article" date="2009" name="Nat. Biotechnol.">
        <title>Mass-spectrometric identification and relative quantification of N-linked cell surface glycoproteins.</title>
        <authorList>
            <person name="Wollscheid B."/>
            <person name="Bausch-Fluck D."/>
            <person name="Henderson C."/>
            <person name="O'Brien R."/>
            <person name="Bibel M."/>
            <person name="Schiess R."/>
            <person name="Aebersold R."/>
            <person name="Watts J.D."/>
        </authorList>
    </citation>
    <scope>GLYCOSYLATION [LARGE SCALE ANALYSIS] AT ASN-313 AND ASN-335</scope>
</reference>
<reference key="4">
    <citation type="journal article" date="2010" name="Cell">
        <title>A tissue-specific atlas of mouse protein phosphorylation and expression.</title>
        <authorList>
            <person name="Huttlin E.L."/>
            <person name="Jedrychowski M.P."/>
            <person name="Elias J.E."/>
            <person name="Goswami T."/>
            <person name="Rad R."/>
            <person name="Beausoleil S.A."/>
            <person name="Villen J."/>
            <person name="Haas W."/>
            <person name="Sowa M.E."/>
            <person name="Gygi S.P."/>
        </authorList>
    </citation>
    <scope>IDENTIFICATION BY MASS SPECTROMETRY [LARGE SCALE ANALYSIS]</scope>
    <source>
        <tissue>Heart</tissue>
        <tissue>Kidney</tissue>
        <tissue>Liver</tissue>
        <tissue>Lung</tissue>
        <tissue>Testis</tissue>
    </source>
</reference>
<accession>Q61503</accession>
<accession>Q3U3S1</accession>